<accession>Q57826</accession>
<feature type="chain" id="PRO_0000106844" description="CRISPR-associated protein Cas7/Cst2/DevR">
    <location>
        <begin position="1"/>
        <end position="320"/>
    </location>
</feature>
<sequence length="320" mass="35924">MFLRISGRVRLNSHSLNAQGGGGTNYVEITKAKVSIKNDDRWEILEVPAISGNMVKHWHFVSFVDFFRETDYKDNLTERALRYNGARFGQETKAKKADGSEVELKDESEIIKNFADADVHGFLAPKTGVRRVSLVKTSFILPTEDFIKEVDERLVYAVKHNRVDIDEKGAIKSGEEQTAQMLFNREYATGLYGFEIILDLGFVGVPQSSPSNPVIEDDERKARIVSALKALIPMLSGYIGANLARSFPVFKLEEMIAVVSEKPIPALVHGFYEDYVEVSKNVVENAKKLGFEIEDFGYNVDFGESVSSVEELISKIIEKL</sequence>
<gene>
    <name type="primary">cas7</name>
    <name type="ordered locus">MJ0381</name>
</gene>
<proteinExistence type="inferred from homology"/>
<protein>
    <recommendedName>
        <fullName>CRISPR-associated protein Cas7/Cst2/DevR</fullName>
    </recommendedName>
    <alternativeName>
        <fullName>CRISPR-associated protein Cas7/Csa2, subtype I-A/Apern</fullName>
    </alternativeName>
</protein>
<name>CAS7_METJA</name>
<reference key="1">
    <citation type="journal article" date="1996" name="Science">
        <title>Complete genome sequence of the methanogenic archaeon, Methanococcus jannaschii.</title>
        <authorList>
            <person name="Bult C.J."/>
            <person name="White O."/>
            <person name="Olsen G.J."/>
            <person name="Zhou L."/>
            <person name="Fleischmann R.D."/>
            <person name="Sutton G.G."/>
            <person name="Blake J.A."/>
            <person name="FitzGerald L.M."/>
            <person name="Clayton R.A."/>
            <person name="Gocayne J.D."/>
            <person name="Kerlavage A.R."/>
            <person name="Dougherty B.A."/>
            <person name="Tomb J.-F."/>
            <person name="Adams M.D."/>
            <person name="Reich C.I."/>
            <person name="Overbeek R."/>
            <person name="Kirkness E.F."/>
            <person name="Weinstock K.G."/>
            <person name="Merrick J.M."/>
            <person name="Glodek A."/>
            <person name="Scott J.L."/>
            <person name="Geoghagen N.S.M."/>
            <person name="Weidman J.F."/>
            <person name="Fuhrmann J.L."/>
            <person name="Nguyen D."/>
            <person name="Utterback T.R."/>
            <person name="Kelley J.M."/>
            <person name="Peterson J.D."/>
            <person name="Sadow P.W."/>
            <person name="Hanna M.C."/>
            <person name="Cotton M.D."/>
            <person name="Roberts K.M."/>
            <person name="Hurst M.A."/>
            <person name="Kaine B.P."/>
            <person name="Borodovsky M."/>
            <person name="Klenk H.-P."/>
            <person name="Fraser C.M."/>
            <person name="Smith H.O."/>
            <person name="Woese C.R."/>
            <person name="Venter J.C."/>
        </authorList>
    </citation>
    <scope>NUCLEOTIDE SEQUENCE [LARGE SCALE GENOMIC DNA]</scope>
    <source>
        <strain>ATCC 43067 / DSM 2661 / JAL-1 / JCM 10045 / NBRC 100440</strain>
    </source>
</reference>
<evidence type="ECO:0000250" key="1"/>
<evidence type="ECO:0000305" key="2"/>
<organism>
    <name type="scientific">Methanocaldococcus jannaschii (strain ATCC 43067 / DSM 2661 / JAL-1 / JCM 10045 / NBRC 100440)</name>
    <name type="common">Methanococcus jannaschii</name>
    <dbReference type="NCBI Taxonomy" id="243232"/>
    <lineage>
        <taxon>Archaea</taxon>
        <taxon>Methanobacteriati</taxon>
        <taxon>Methanobacteriota</taxon>
        <taxon>Methanomada group</taxon>
        <taxon>Methanococci</taxon>
        <taxon>Methanococcales</taxon>
        <taxon>Methanocaldococcaceae</taxon>
        <taxon>Methanocaldococcus</taxon>
    </lineage>
</organism>
<comment type="function">
    <text evidence="1">CRISPR (clustered regularly interspaced short palindromic repeat) is an adaptive immune system that provides protection against mobile genetic elements (viruses, transposable elements and conjugative plasmids). CRISPR clusters contain spacers, sequences complementary to antecedent mobile elements, and target invading nucleic acids. CRISPR clusters are transcribed and processed into CRISPR RNA (crRNA) (By similarity).</text>
</comment>
<comment type="similarity">
    <text evidence="2">Belongs to the CRISPR-associated protein Cas7/Cst2/DevR family. Subtype I-a/Apern subfamily.</text>
</comment>
<dbReference type="EMBL" id="L77117">
    <property type="protein sequence ID" value="AAB98370.1"/>
    <property type="molecule type" value="Genomic_DNA"/>
</dbReference>
<dbReference type="PIR" id="E64347">
    <property type="entry name" value="E64347"/>
</dbReference>
<dbReference type="RefSeq" id="WP_010869880.1">
    <property type="nucleotide sequence ID" value="NC_000909.1"/>
</dbReference>
<dbReference type="SMR" id="Q57826"/>
<dbReference type="STRING" id="243232.MJ_0381"/>
<dbReference type="PaxDb" id="243232-MJ_0381"/>
<dbReference type="EnsemblBacteria" id="AAB98370">
    <property type="protein sequence ID" value="AAB98370"/>
    <property type="gene ID" value="MJ_0381"/>
</dbReference>
<dbReference type="GeneID" id="1451238"/>
<dbReference type="KEGG" id="mja:MJ_0381"/>
<dbReference type="eggNOG" id="arCOG03617">
    <property type="taxonomic scope" value="Archaea"/>
</dbReference>
<dbReference type="HOGENOM" id="CLU_054331_1_0_2"/>
<dbReference type="InParanoid" id="Q57826"/>
<dbReference type="OrthoDB" id="97643at2157"/>
<dbReference type="PhylomeDB" id="Q57826"/>
<dbReference type="Proteomes" id="UP000000805">
    <property type="component" value="Chromosome"/>
</dbReference>
<dbReference type="GO" id="GO:0051607">
    <property type="term" value="P:defense response to virus"/>
    <property type="evidence" value="ECO:0007669"/>
    <property type="project" value="UniProtKB-KW"/>
</dbReference>
<dbReference type="InterPro" id="IPR002764">
    <property type="entry name" value="Cas7/Cst2/DevR_sub_I-a/Apern"/>
</dbReference>
<dbReference type="InterPro" id="IPR010154">
    <property type="entry name" value="CRISPR-assoc_Cas7/Cst2/DevR"/>
</dbReference>
<dbReference type="InterPro" id="IPR052681">
    <property type="entry name" value="CRISPR-Cas7/Cst2/DevR"/>
</dbReference>
<dbReference type="NCBIfam" id="TIGR01875">
    <property type="entry name" value="cas_MJ0381"/>
    <property type="match status" value="1"/>
</dbReference>
<dbReference type="NCBIfam" id="TIGR02583">
    <property type="entry name" value="DevR_archaea"/>
    <property type="match status" value="1"/>
</dbReference>
<dbReference type="PANTHER" id="PTHR37459">
    <property type="match status" value="1"/>
</dbReference>
<dbReference type="PANTHER" id="PTHR37459:SF1">
    <property type="entry name" value="CRISPR-ASSOCIATED PROTEIN CAS7_CST2_DEVR"/>
    <property type="match status" value="1"/>
</dbReference>
<dbReference type="Pfam" id="PF01905">
    <property type="entry name" value="DevR"/>
    <property type="match status" value="1"/>
</dbReference>
<keyword id="KW-0051">Antiviral defense</keyword>
<keyword id="KW-1185">Reference proteome</keyword>